<dbReference type="EMBL" id="AL590447">
    <property type="protein sequence ID" value="CAD25538.1"/>
    <property type="molecule type" value="Genomic_DNA"/>
</dbReference>
<dbReference type="RefSeq" id="NP_585934.1">
    <property type="nucleotide sequence ID" value="NM_001041556.1"/>
</dbReference>
<dbReference type="SMR" id="Q8SV55"/>
<dbReference type="GeneID" id="859362"/>
<dbReference type="KEGG" id="ecu:ECU07_0060"/>
<dbReference type="VEuPathDB" id="MicrosporidiaDB:ECU07_0060"/>
<dbReference type="HOGENOM" id="CLU_059413_0_0_1"/>
<dbReference type="InParanoid" id="Q8SV55"/>
<dbReference type="OrthoDB" id="9171at6029"/>
<dbReference type="Proteomes" id="UP000000819">
    <property type="component" value="Chromosome VII"/>
</dbReference>
<dbReference type="InterPro" id="IPR019081">
    <property type="entry name" value="UPF0328"/>
</dbReference>
<dbReference type="Pfam" id="PF09591">
    <property type="entry name" value="DUF2463"/>
    <property type="match status" value="1"/>
</dbReference>
<name>Y706_ENCCU</name>
<evidence type="ECO:0000305" key="1"/>
<protein>
    <recommendedName>
        <fullName>UPF0328 protein ECU07_0060</fullName>
    </recommendedName>
</protein>
<accession>Q8SV55</accession>
<comment type="similarity">
    <text evidence="1">Belongs to the UPF0328 family.</text>
</comment>
<reference key="1">
    <citation type="journal article" date="2001" name="Nature">
        <title>Genome sequence and gene compaction of the eukaryote parasite Encephalitozoon cuniculi.</title>
        <authorList>
            <person name="Katinka M.D."/>
            <person name="Duprat S."/>
            <person name="Cornillot E."/>
            <person name="Metenier G."/>
            <person name="Thomarat F."/>
            <person name="Prensier G."/>
            <person name="Barbe V."/>
            <person name="Peyretaillade E."/>
            <person name="Brottier P."/>
            <person name="Wincker P."/>
            <person name="Delbac F."/>
            <person name="El Alaoui H."/>
            <person name="Peyret P."/>
            <person name="Saurin W."/>
            <person name="Gouy M."/>
            <person name="Weissenbach J."/>
            <person name="Vivares C.P."/>
        </authorList>
    </citation>
    <scope>NUCLEOTIDE SEQUENCE [LARGE SCALE GENOMIC DNA]</scope>
    <source>
        <strain>GB-M1</strain>
    </source>
</reference>
<feature type="chain" id="PRO_0000223135" description="UPF0328 protein ECU07_0060">
    <location>
        <begin position="1"/>
        <end position="258"/>
    </location>
</feature>
<proteinExistence type="inferred from homology"/>
<keyword id="KW-1185">Reference proteome</keyword>
<gene>
    <name type="ordered locus">ECU07_0060</name>
</gene>
<organism>
    <name type="scientific">Encephalitozoon cuniculi (strain GB-M1)</name>
    <name type="common">Microsporidian parasite</name>
    <dbReference type="NCBI Taxonomy" id="284813"/>
    <lineage>
        <taxon>Eukaryota</taxon>
        <taxon>Fungi</taxon>
        <taxon>Fungi incertae sedis</taxon>
        <taxon>Microsporidia</taxon>
        <taxon>Unikaryonidae</taxon>
        <taxon>Encephalitozoon</taxon>
    </lineage>
</organism>
<sequence>MNATHILESHEANEQHHATNRSYWEVTYNILVIMSIVFSMATYLILDKDRFEKNPLLRFAIILLPLSCSAIQYLFLLYTNWKSNYEPEGTLHKALYYFFNVLLIAFAIISILSIIVLPINGWKGDDLLSSIVLPSFFIPPTYLLSTSCCLVPGQIGFTDTGINVLIDILILLCPLVSLVLIPEEPKYRLIPAILFPVLILIRLLREKYYPSGKSALPTAPWRVAVFVLILIIAVFAYALMVWGSMVILNNHFGLLDIS</sequence>